<comment type="function">
    <text>This protein promotes the GTP-dependent binding of aminoacyl-tRNA to the A-site of ribosomes during protein biosynthesis.</text>
</comment>
<comment type="subcellular location">
    <subcellularLocation>
        <location>Cytoplasm</location>
    </subcellularLocation>
</comment>
<comment type="developmental stage">
    <text>Expressed only in the sporophyte, a shell-boring, filamentous phase.</text>
</comment>
<comment type="similarity">
    <text evidence="3">Belongs to the TRAFAC class translation factor GTPase superfamily. Classic translation factor GTPase family. EF-Tu/EF-1A subfamily.</text>
</comment>
<proteinExistence type="evidence at transcript level"/>
<keyword id="KW-0963">Cytoplasm</keyword>
<keyword id="KW-0251">Elongation factor</keyword>
<keyword id="KW-0342">GTP-binding</keyword>
<keyword id="KW-0488">Methylation</keyword>
<keyword id="KW-0547">Nucleotide-binding</keyword>
<keyword id="KW-0648">Protein biosynthesis</keyword>
<accession>P50257</accession>
<evidence type="ECO:0000250" key="1"/>
<evidence type="ECO:0000250" key="2">
    <source>
        <dbReference type="UniProtKB" id="Q8GTY0"/>
    </source>
</evidence>
<evidence type="ECO:0000255" key="3">
    <source>
        <dbReference type="PROSITE-ProRule" id="PRU01059"/>
    </source>
</evidence>
<evidence type="ECO:0000256" key="4">
    <source>
        <dbReference type="SAM" id="MobiDB-lite"/>
    </source>
</evidence>
<sequence>MGKEKTHINLVVIGHVDAGKSTTTGHLIYKLGGIDARTIAKFEADAKEMGKSSFKYAWVLDKLKAERERGITIDIALWKFSTAKFEYTVIDAPGHRDFIKNMITGTSQADVALLVIDGNNFEAGIAEGGSTKEHALLAYTLGVKQLAVGINKMDDVKDKDGGPWAQGRYNEVVDYLGPELMKIGFKKKDKGDKKKGDKKEKKDKKDKGEKKYVCSATFVPISGWTGDNMLEKSTNMPWYTGPTLFEVLDAMKPPKRPTEDPLRLPLQDVYKIGGIGTVPVGRVETGILKAGMQVTFEPAGKAAVEVKSVEMHHTSVPQAIPGDNVGFNVKLTVKDIKRGDVCGDTKNDPPIPTECFLANVIIQDHKNIRNGYTPVLDCHTAHIACKFASILSKKDKRGKQTHDVSDDTEWATKDDAEPRNNRMNIAAKTGESVNVWLQPTKAMVVEAYSMYSPLGRFAVRDMKKTVAVGVIQCVQPRNMAKGATEELPIRGESDAVSKYIKFRPLPLKAGKKAKK</sequence>
<name>EF1AS_PORPU</name>
<organism>
    <name type="scientific">Porphyra purpurea</name>
    <name type="common">Red seaweed</name>
    <name type="synonym">Ulva purpurea</name>
    <dbReference type="NCBI Taxonomy" id="2787"/>
    <lineage>
        <taxon>Eukaryota</taxon>
        <taxon>Rhodophyta</taxon>
        <taxon>Bangiophyceae</taxon>
        <taxon>Bangiales</taxon>
        <taxon>Bangiaceae</taxon>
        <taxon>Porphyra</taxon>
    </lineage>
</organism>
<protein>
    <recommendedName>
        <fullName>Elongation factor 1-alpha S</fullName>
        <shortName>EF-1-alpha S</shortName>
    </recommendedName>
    <alternativeName>
        <fullName>Sporophyte-specific EF-1-alpha</fullName>
    </alternativeName>
</protein>
<feature type="chain" id="PRO_0000090944" description="Elongation factor 1-alpha S">
    <location>
        <begin position="1"/>
        <end position="515"/>
    </location>
</feature>
<feature type="domain" description="tr-type G" evidence="3">
    <location>
        <begin position="5"/>
        <end position="258"/>
    </location>
</feature>
<feature type="region of interest" description="G1" evidence="3">
    <location>
        <begin position="14"/>
        <end position="21"/>
    </location>
</feature>
<feature type="region of interest" description="G2" evidence="3">
    <location>
        <begin position="70"/>
        <end position="74"/>
    </location>
</feature>
<feature type="region of interest" description="G3" evidence="3">
    <location>
        <begin position="91"/>
        <end position="94"/>
    </location>
</feature>
<feature type="region of interest" description="G4" evidence="3">
    <location>
        <begin position="151"/>
        <end position="154"/>
    </location>
</feature>
<feature type="region of interest" description="Disordered" evidence="4">
    <location>
        <begin position="187"/>
        <end position="206"/>
    </location>
</feature>
<feature type="region of interest" description="G5" evidence="3">
    <location>
        <begin position="222"/>
        <end position="224"/>
    </location>
</feature>
<feature type="region of interest" description="Disordered" evidence="4">
    <location>
        <begin position="396"/>
        <end position="419"/>
    </location>
</feature>
<feature type="compositionally biased region" description="Basic and acidic residues" evidence="4">
    <location>
        <begin position="189"/>
        <end position="206"/>
    </location>
</feature>
<feature type="compositionally biased region" description="Basic and acidic residues" evidence="4">
    <location>
        <begin position="398"/>
        <end position="419"/>
    </location>
</feature>
<feature type="binding site" evidence="1">
    <location>
        <begin position="14"/>
        <end position="21"/>
    </location>
    <ligand>
        <name>GTP</name>
        <dbReference type="ChEBI" id="CHEBI:37565"/>
    </ligand>
</feature>
<feature type="binding site" evidence="1">
    <location>
        <begin position="91"/>
        <end position="95"/>
    </location>
    <ligand>
        <name>GTP</name>
        <dbReference type="ChEBI" id="CHEBI:37565"/>
    </ligand>
</feature>
<feature type="binding site" evidence="1">
    <location>
        <begin position="151"/>
        <end position="154"/>
    </location>
    <ligand>
        <name>GTP</name>
        <dbReference type="ChEBI" id="CHEBI:37565"/>
    </ligand>
</feature>
<feature type="modified residue" description="N6,N6-dimethyllysine" evidence="2">
    <location>
        <position position="55"/>
    </location>
</feature>
<feature type="modified residue" description="N6,N6,N6-trimethyllysine" evidence="2">
    <location>
        <position position="79"/>
    </location>
</feature>
<feature type="modified residue" description="N6-methyllysine" evidence="2">
    <location>
        <position position="289"/>
    </location>
</feature>
<feature type="modified residue" description="N6,N6,N6-trimethyllysine" evidence="2">
    <location>
        <position position="334"/>
    </location>
</feature>
<feature type="modified residue" description="N6,N6,N6-trimethyllysine" evidence="2">
    <location>
        <position position="441"/>
    </location>
</feature>
<reference key="1">
    <citation type="journal article" date="1996" name="Plant Mol. Biol.">
        <title>Elongation factor 1 alpha genes of the red alga Porphyra purpurea include a novel, developmentally specialized variant.</title>
        <authorList>
            <person name="Liu Q.Y."/>
            <person name="Baldauf S.L."/>
            <person name="Reith M.E."/>
        </authorList>
    </citation>
    <scope>NUCLEOTIDE SEQUENCE [MRNA]</scope>
    <source>
        <strain>Avonport</strain>
    </source>
</reference>
<gene>
    <name type="primary">TEF-S</name>
</gene>
<dbReference type="EMBL" id="U08841">
    <property type="protein sequence ID" value="AAA61790.1"/>
    <property type="molecule type" value="mRNA"/>
</dbReference>
<dbReference type="SMR" id="P50257"/>
<dbReference type="GO" id="GO:0005737">
    <property type="term" value="C:cytoplasm"/>
    <property type="evidence" value="ECO:0007669"/>
    <property type="project" value="UniProtKB-SubCell"/>
</dbReference>
<dbReference type="GO" id="GO:0005525">
    <property type="term" value="F:GTP binding"/>
    <property type="evidence" value="ECO:0007669"/>
    <property type="project" value="UniProtKB-KW"/>
</dbReference>
<dbReference type="GO" id="GO:0003924">
    <property type="term" value="F:GTPase activity"/>
    <property type="evidence" value="ECO:0007669"/>
    <property type="project" value="InterPro"/>
</dbReference>
<dbReference type="GO" id="GO:0003746">
    <property type="term" value="F:translation elongation factor activity"/>
    <property type="evidence" value="ECO:0007669"/>
    <property type="project" value="UniProtKB-KW"/>
</dbReference>
<dbReference type="CDD" id="cd01883">
    <property type="entry name" value="EF1_alpha"/>
    <property type="match status" value="1"/>
</dbReference>
<dbReference type="CDD" id="cd03693">
    <property type="entry name" value="EF1_alpha_II"/>
    <property type="match status" value="1"/>
</dbReference>
<dbReference type="FunFam" id="2.40.30.10:FF:000003">
    <property type="entry name" value="Elongation factor 1-alpha"/>
    <property type="match status" value="1"/>
</dbReference>
<dbReference type="FunFam" id="3.40.50.300:FF:001857">
    <property type="entry name" value="Elongation factor 1-alpha"/>
    <property type="match status" value="1"/>
</dbReference>
<dbReference type="Gene3D" id="3.40.50.300">
    <property type="entry name" value="P-loop containing nucleotide triphosphate hydrolases"/>
    <property type="match status" value="1"/>
</dbReference>
<dbReference type="Gene3D" id="2.40.30.10">
    <property type="entry name" value="Translation factors"/>
    <property type="match status" value="2"/>
</dbReference>
<dbReference type="InterPro" id="IPR004161">
    <property type="entry name" value="EFTu-like_2"/>
</dbReference>
<dbReference type="InterPro" id="IPR031157">
    <property type="entry name" value="G_TR_CS"/>
</dbReference>
<dbReference type="InterPro" id="IPR054696">
    <property type="entry name" value="GTP-eEF1A_C"/>
</dbReference>
<dbReference type="InterPro" id="IPR027417">
    <property type="entry name" value="P-loop_NTPase"/>
</dbReference>
<dbReference type="InterPro" id="IPR000795">
    <property type="entry name" value="T_Tr_GTP-bd_dom"/>
</dbReference>
<dbReference type="InterPro" id="IPR050100">
    <property type="entry name" value="TRAFAC_GTPase_members"/>
</dbReference>
<dbReference type="InterPro" id="IPR009000">
    <property type="entry name" value="Transl_B-barrel_sf"/>
</dbReference>
<dbReference type="InterPro" id="IPR009001">
    <property type="entry name" value="Transl_elong_EF1A/Init_IF2_C"/>
</dbReference>
<dbReference type="PANTHER" id="PTHR23115">
    <property type="entry name" value="TRANSLATION FACTOR"/>
    <property type="match status" value="1"/>
</dbReference>
<dbReference type="Pfam" id="PF22594">
    <property type="entry name" value="GTP-eEF1A_C"/>
    <property type="match status" value="1"/>
</dbReference>
<dbReference type="Pfam" id="PF00009">
    <property type="entry name" value="GTP_EFTU"/>
    <property type="match status" value="1"/>
</dbReference>
<dbReference type="Pfam" id="PF03144">
    <property type="entry name" value="GTP_EFTU_D2"/>
    <property type="match status" value="1"/>
</dbReference>
<dbReference type="PRINTS" id="PR00315">
    <property type="entry name" value="ELONGATNFCT"/>
</dbReference>
<dbReference type="SUPFAM" id="SSF50465">
    <property type="entry name" value="EF-Tu/eEF-1alpha/eIF2-gamma C-terminal domain"/>
    <property type="match status" value="1"/>
</dbReference>
<dbReference type="SUPFAM" id="SSF52540">
    <property type="entry name" value="P-loop containing nucleoside triphosphate hydrolases"/>
    <property type="match status" value="1"/>
</dbReference>
<dbReference type="SUPFAM" id="SSF50447">
    <property type="entry name" value="Translation proteins"/>
    <property type="match status" value="1"/>
</dbReference>
<dbReference type="PROSITE" id="PS00301">
    <property type="entry name" value="G_TR_1"/>
    <property type="match status" value="1"/>
</dbReference>
<dbReference type="PROSITE" id="PS51722">
    <property type="entry name" value="G_TR_2"/>
    <property type="match status" value="1"/>
</dbReference>